<sequence>MKPSIVAKLEALHERHEEVQALLGDAQTIADQERFRALSREYAQLSDVSRCFTDWQQVQEDIETAQMMLDDPEMREMAQDELREAKEKSEQLEQQLQVLLLPKDPDDERNAFLEVRAGTGGDEAALFAGDLFRMYSRYAEARRWRVEIMSASEGEHGGYKEIIAKISGDGVYGRLKFESGGHRVQRVPATESQGRIHTSACTVAVMPELPDAELPDINPADLRIDTFRSSGAGGQHVNTTDSAIRITHLPTGIVVECQDERSQHKNKAKALSVLGARIHAAEMAKRQQAEASTRRNLLGSGDRSDRNRTYNFPQGRVTDHRINLTLYRLDEVMEGKLDMLIEPIIQEHQADQLAALSEQE</sequence>
<protein>
    <recommendedName>
        <fullName evidence="1">Peptide chain release factor 1</fullName>
        <shortName evidence="1">RF-1</shortName>
    </recommendedName>
</protein>
<gene>
    <name evidence="1" type="primary">prfA</name>
    <name type="ordered locus">ECIAI39_1547</name>
</gene>
<name>RF1_ECO7I</name>
<feature type="chain" id="PRO_1000117239" description="Peptide chain release factor 1">
    <location>
        <begin position="1"/>
        <end position="360"/>
    </location>
</feature>
<feature type="region of interest" description="Disordered" evidence="2">
    <location>
        <begin position="284"/>
        <end position="313"/>
    </location>
</feature>
<feature type="modified residue" description="N5-methylglutamine" evidence="1">
    <location>
        <position position="235"/>
    </location>
</feature>
<organism>
    <name type="scientific">Escherichia coli O7:K1 (strain IAI39 / ExPEC)</name>
    <dbReference type="NCBI Taxonomy" id="585057"/>
    <lineage>
        <taxon>Bacteria</taxon>
        <taxon>Pseudomonadati</taxon>
        <taxon>Pseudomonadota</taxon>
        <taxon>Gammaproteobacteria</taxon>
        <taxon>Enterobacterales</taxon>
        <taxon>Enterobacteriaceae</taxon>
        <taxon>Escherichia</taxon>
    </lineage>
</organism>
<keyword id="KW-0963">Cytoplasm</keyword>
<keyword id="KW-0488">Methylation</keyword>
<keyword id="KW-0648">Protein biosynthesis</keyword>
<evidence type="ECO:0000255" key="1">
    <source>
        <dbReference type="HAMAP-Rule" id="MF_00093"/>
    </source>
</evidence>
<evidence type="ECO:0000256" key="2">
    <source>
        <dbReference type="SAM" id="MobiDB-lite"/>
    </source>
</evidence>
<dbReference type="EMBL" id="CU928164">
    <property type="protein sequence ID" value="CAR17679.1"/>
    <property type="molecule type" value="Genomic_DNA"/>
</dbReference>
<dbReference type="RefSeq" id="WP_000804726.1">
    <property type="nucleotide sequence ID" value="NC_011750.1"/>
</dbReference>
<dbReference type="RefSeq" id="YP_002407547.1">
    <property type="nucleotide sequence ID" value="NC_011750.1"/>
</dbReference>
<dbReference type="SMR" id="B7NUX7"/>
<dbReference type="STRING" id="585057.ECIAI39_1547"/>
<dbReference type="GeneID" id="93775276"/>
<dbReference type="KEGG" id="ect:ECIAI39_1547"/>
<dbReference type="PATRIC" id="fig|585057.6.peg.1617"/>
<dbReference type="HOGENOM" id="CLU_036856_0_1_6"/>
<dbReference type="Proteomes" id="UP000000749">
    <property type="component" value="Chromosome"/>
</dbReference>
<dbReference type="GO" id="GO:0005737">
    <property type="term" value="C:cytoplasm"/>
    <property type="evidence" value="ECO:0007669"/>
    <property type="project" value="UniProtKB-SubCell"/>
</dbReference>
<dbReference type="GO" id="GO:0016149">
    <property type="term" value="F:translation release factor activity, codon specific"/>
    <property type="evidence" value="ECO:0007669"/>
    <property type="project" value="UniProtKB-UniRule"/>
</dbReference>
<dbReference type="FunFam" id="3.30.160.20:FF:000004">
    <property type="entry name" value="Peptide chain release factor 1"/>
    <property type="match status" value="1"/>
</dbReference>
<dbReference type="FunFam" id="3.30.70.1660:FF:000002">
    <property type="entry name" value="Peptide chain release factor 1"/>
    <property type="match status" value="1"/>
</dbReference>
<dbReference type="FunFam" id="3.30.70.1660:FF:000004">
    <property type="entry name" value="Peptide chain release factor 1"/>
    <property type="match status" value="1"/>
</dbReference>
<dbReference type="Gene3D" id="3.30.160.20">
    <property type="match status" value="1"/>
</dbReference>
<dbReference type="Gene3D" id="3.30.70.1660">
    <property type="match status" value="1"/>
</dbReference>
<dbReference type="Gene3D" id="6.10.140.1950">
    <property type="match status" value="1"/>
</dbReference>
<dbReference type="HAMAP" id="MF_00093">
    <property type="entry name" value="Rel_fac_1"/>
    <property type="match status" value="1"/>
</dbReference>
<dbReference type="InterPro" id="IPR005139">
    <property type="entry name" value="PCRF"/>
</dbReference>
<dbReference type="InterPro" id="IPR000352">
    <property type="entry name" value="Pep_chain_release_fac_I"/>
</dbReference>
<dbReference type="InterPro" id="IPR045853">
    <property type="entry name" value="Pep_chain_release_fac_I_sf"/>
</dbReference>
<dbReference type="InterPro" id="IPR050057">
    <property type="entry name" value="Prokaryotic/Mito_RF"/>
</dbReference>
<dbReference type="InterPro" id="IPR004373">
    <property type="entry name" value="RF-1"/>
</dbReference>
<dbReference type="NCBIfam" id="TIGR00019">
    <property type="entry name" value="prfA"/>
    <property type="match status" value="1"/>
</dbReference>
<dbReference type="NCBIfam" id="NF001859">
    <property type="entry name" value="PRK00591.1"/>
    <property type="match status" value="1"/>
</dbReference>
<dbReference type="PANTHER" id="PTHR43804">
    <property type="entry name" value="LD18447P"/>
    <property type="match status" value="1"/>
</dbReference>
<dbReference type="PANTHER" id="PTHR43804:SF7">
    <property type="entry name" value="LD18447P"/>
    <property type="match status" value="1"/>
</dbReference>
<dbReference type="Pfam" id="PF03462">
    <property type="entry name" value="PCRF"/>
    <property type="match status" value="1"/>
</dbReference>
<dbReference type="Pfam" id="PF00472">
    <property type="entry name" value="RF-1"/>
    <property type="match status" value="1"/>
</dbReference>
<dbReference type="SMART" id="SM00937">
    <property type="entry name" value="PCRF"/>
    <property type="match status" value="1"/>
</dbReference>
<dbReference type="SUPFAM" id="SSF75620">
    <property type="entry name" value="Release factor"/>
    <property type="match status" value="1"/>
</dbReference>
<dbReference type="PROSITE" id="PS00745">
    <property type="entry name" value="RF_PROK_I"/>
    <property type="match status" value="1"/>
</dbReference>
<accession>B7NUX7</accession>
<proteinExistence type="inferred from homology"/>
<reference key="1">
    <citation type="journal article" date="2009" name="PLoS Genet.">
        <title>Organised genome dynamics in the Escherichia coli species results in highly diverse adaptive paths.</title>
        <authorList>
            <person name="Touchon M."/>
            <person name="Hoede C."/>
            <person name="Tenaillon O."/>
            <person name="Barbe V."/>
            <person name="Baeriswyl S."/>
            <person name="Bidet P."/>
            <person name="Bingen E."/>
            <person name="Bonacorsi S."/>
            <person name="Bouchier C."/>
            <person name="Bouvet O."/>
            <person name="Calteau A."/>
            <person name="Chiapello H."/>
            <person name="Clermont O."/>
            <person name="Cruveiller S."/>
            <person name="Danchin A."/>
            <person name="Diard M."/>
            <person name="Dossat C."/>
            <person name="Karoui M.E."/>
            <person name="Frapy E."/>
            <person name="Garry L."/>
            <person name="Ghigo J.M."/>
            <person name="Gilles A.M."/>
            <person name="Johnson J."/>
            <person name="Le Bouguenec C."/>
            <person name="Lescat M."/>
            <person name="Mangenot S."/>
            <person name="Martinez-Jehanne V."/>
            <person name="Matic I."/>
            <person name="Nassif X."/>
            <person name="Oztas S."/>
            <person name="Petit M.A."/>
            <person name="Pichon C."/>
            <person name="Rouy Z."/>
            <person name="Ruf C.S."/>
            <person name="Schneider D."/>
            <person name="Tourret J."/>
            <person name="Vacherie B."/>
            <person name="Vallenet D."/>
            <person name="Medigue C."/>
            <person name="Rocha E.P.C."/>
            <person name="Denamur E."/>
        </authorList>
    </citation>
    <scope>NUCLEOTIDE SEQUENCE [LARGE SCALE GENOMIC DNA]</scope>
    <source>
        <strain>IAI39 / ExPEC</strain>
    </source>
</reference>
<comment type="function">
    <text evidence="1">Peptide chain release factor 1 directs the termination of translation in response to the peptide chain termination codons UAG and UAA.</text>
</comment>
<comment type="subcellular location">
    <subcellularLocation>
        <location evidence="1">Cytoplasm</location>
    </subcellularLocation>
</comment>
<comment type="PTM">
    <text evidence="1">Methylated by PrmC. Methylation increases the termination efficiency of RF1.</text>
</comment>
<comment type="similarity">
    <text evidence="1">Belongs to the prokaryotic/mitochondrial release factor family.</text>
</comment>